<organism>
    <name type="scientific">Actinobacillus pleuropneumoniae serotype 3 (strain JL03)</name>
    <dbReference type="NCBI Taxonomy" id="434271"/>
    <lineage>
        <taxon>Bacteria</taxon>
        <taxon>Pseudomonadati</taxon>
        <taxon>Pseudomonadota</taxon>
        <taxon>Gammaproteobacteria</taxon>
        <taxon>Pasteurellales</taxon>
        <taxon>Pasteurellaceae</taxon>
        <taxon>Actinobacillus</taxon>
    </lineage>
</organism>
<name>RLMM_ACTPJ</name>
<feature type="chain" id="PRO_1000201507" description="Ribosomal RNA large subunit methyltransferase M">
    <location>
        <begin position="1"/>
        <end position="361"/>
    </location>
</feature>
<feature type="active site" description="Proton acceptor" evidence="1">
    <location>
        <position position="309"/>
    </location>
</feature>
<feature type="binding site" evidence="1">
    <location>
        <position position="190"/>
    </location>
    <ligand>
        <name>S-adenosyl-L-methionine</name>
        <dbReference type="ChEBI" id="CHEBI:59789"/>
    </ligand>
</feature>
<feature type="binding site" evidence="1">
    <location>
        <begin position="223"/>
        <end position="226"/>
    </location>
    <ligand>
        <name>S-adenosyl-L-methionine</name>
        <dbReference type="ChEBI" id="CHEBI:59789"/>
    </ligand>
</feature>
<feature type="binding site" evidence="1">
    <location>
        <position position="242"/>
    </location>
    <ligand>
        <name>S-adenosyl-L-methionine</name>
        <dbReference type="ChEBI" id="CHEBI:59789"/>
    </ligand>
</feature>
<feature type="binding site" evidence="1">
    <location>
        <position position="262"/>
    </location>
    <ligand>
        <name>S-adenosyl-L-methionine</name>
        <dbReference type="ChEBI" id="CHEBI:59789"/>
    </ligand>
</feature>
<feature type="binding site" evidence="1">
    <location>
        <position position="280"/>
    </location>
    <ligand>
        <name>S-adenosyl-L-methionine</name>
        <dbReference type="ChEBI" id="CHEBI:59789"/>
    </ligand>
</feature>
<dbReference type="EC" id="2.1.1.186" evidence="1"/>
<dbReference type="EMBL" id="CP000687">
    <property type="protein sequence ID" value="ABY69252.1"/>
    <property type="molecule type" value="Genomic_DNA"/>
</dbReference>
<dbReference type="RefSeq" id="WP_005607570.1">
    <property type="nucleotide sequence ID" value="NC_010278.1"/>
</dbReference>
<dbReference type="SMR" id="B0BNW7"/>
<dbReference type="KEGG" id="apj:APJL_0683"/>
<dbReference type="HOGENOM" id="CLU_043780_0_0_6"/>
<dbReference type="Proteomes" id="UP000008547">
    <property type="component" value="Chromosome"/>
</dbReference>
<dbReference type="GO" id="GO:0005737">
    <property type="term" value="C:cytoplasm"/>
    <property type="evidence" value="ECO:0007669"/>
    <property type="project" value="UniProtKB-SubCell"/>
</dbReference>
<dbReference type="GO" id="GO:0008757">
    <property type="term" value="F:S-adenosylmethionine-dependent methyltransferase activity"/>
    <property type="evidence" value="ECO:0007669"/>
    <property type="project" value="UniProtKB-UniRule"/>
</dbReference>
<dbReference type="GO" id="GO:0032259">
    <property type="term" value="P:methylation"/>
    <property type="evidence" value="ECO:0007669"/>
    <property type="project" value="UniProtKB-KW"/>
</dbReference>
<dbReference type="GO" id="GO:0006364">
    <property type="term" value="P:rRNA processing"/>
    <property type="evidence" value="ECO:0007669"/>
    <property type="project" value="UniProtKB-UniRule"/>
</dbReference>
<dbReference type="Gene3D" id="3.30.2300.20">
    <property type="match status" value="1"/>
</dbReference>
<dbReference type="Gene3D" id="3.30.70.2810">
    <property type="match status" value="1"/>
</dbReference>
<dbReference type="Gene3D" id="3.40.50.150">
    <property type="entry name" value="Vaccinia Virus protein VP39"/>
    <property type="match status" value="1"/>
</dbReference>
<dbReference type="HAMAP" id="MF_01551">
    <property type="entry name" value="23SrRNA_methyltr_M"/>
    <property type="match status" value="1"/>
</dbReference>
<dbReference type="InterPro" id="IPR040739">
    <property type="entry name" value="RlmM_FDX"/>
</dbReference>
<dbReference type="InterPro" id="IPR048646">
    <property type="entry name" value="RlmM_THUMP-like"/>
</dbReference>
<dbReference type="InterPro" id="IPR002877">
    <property type="entry name" value="RNA_MeTrfase_FtsJ_dom"/>
</dbReference>
<dbReference type="InterPro" id="IPR011224">
    <property type="entry name" value="rRNA_MeTrfase_M"/>
</dbReference>
<dbReference type="InterPro" id="IPR029063">
    <property type="entry name" value="SAM-dependent_MTases_sf"/>
</dbReference>
<dbReference type="NCBIfam" id="NF008734">
    <property type="entry name" value="PRK11760.1"/>
    <property type="match status" value="1"/>
</dbReference>
<dbReference type="PANTHER" id="PTHR37524">
    <property type="entry name" value="RIBOSOMAL RNA LARGE SUBUNIT METHYLTRANSFERASE M"/>
    <property type="match status" value="1"/>
</dbReference>
<dbReference type="PANTHER" id="PTHR37524:SF2">
    <property type="entry name" value="RIBOSOMAL RNA METHYLTRANSFERASE FTSJ DOMAIN-CONTAINING PROTEIN"/>
    <property type="match status" value="1"/>
</dbReference>
<dbReference type="Pfam" id="PF01728">
    <property type="entry name" value="FtsJ"/>
    <property type="match status" value="1"/>
</dbReference>
<dbReference type="Pfam" id="PF18125">
    <property type="entry name" value="RlmM_FDX"/>
    <property type="match status" value="1"/>
</dbReference>
<dbReference type="Pfam" id="PF21239">
    <property type="entry name" value="RLMM_N"/>
    <property type="match status" value="1"/>
</dbReference>
<dbReference type="PIRSF" id="PIRSF028774">
    <property type="entry name" value="UCP028774"/>
    <property type="match status" value="1"/>
</dbReference>
<dbReference type="SUPFAM" id="SSF53335">
    <property type="entry name" value="S-adenosyl-L-methionine-dependent methyltransferases"/>
    <property type="match status" value="1"/>
</dbReference>
<comment type="function">
    <text evidence="1">Catalyzes the 2'-O-methylation at nucleotide C2498 in 23S rRNA.</text>
</comment>
<comment type="catalytic activity">
    <reaction evidence="1">
        <text>cytidine(2498) in 23S rRNA + S-adenosyl-L-methionine = 2'-O-methylcytidine(2498) in 23S rRNA + S-adenosyl-L-homocysteine + H(+)</text>
        <dbReference type="Rhea" id="RHEA:42788"/>
        <dbReference type="Rhea" id="RHEA-COMP:10244"/>
        <dbReference type="Rhea" id="RHEA-COMP:10245"/>
        <dbReference type="ChEBI" id="CHEBI:15378"/>
        <dbReference type="ChEBI" id="CHEBI:57856"/>
        <dbReference type="ChEBI" id="CHEBI:59789"/>
        <dbReference type="ChEBI" id="CHEBI:74495"/>
        <dbReference type="ChEBI" id="CHEBI:82748"/>
        <dbReference type="EC" id="2.1.1.186"/>
    </reaction>
</comment>
<comment type="subunit">
    <text evidence="1">Monomer.</text>
</comment>
<comment type="subcellular location">
    <subcellularLocation>
        <location evidence="1">Cytoplasm</location>
    </subcellularLocation>
</comment>
<comment type="similarity">
    <text evidence="1">Belongs to the class I-like SAM-binding methyltransferase superfamily. RNA methyltransferase RlmE family. RlmM subfamily.</text>
</comment>
<keyword id="KW-0963">Cytoplasm</keyword>
<keyword id="KW-0489">Methyltransferase</keyword>
<keyword id="KW-0698">rRNA processing</keyword>
<keyword id="KW-0949">S-adenosyl-L-methionine</keyword>
<keyword id="KW-0808">Transferase</keyword>
<gene>
    <name evidence="1" type="primary">rlmM</name>
    <name type="ordered locus">APJL_0683</name>
</gene>
<proteinExistence type="inferred from homology"/>
<reference key="1">
    <citation type="journal article" date="2008" name="PLoS ONE">
        <title>Genome biology of Actinobacillus pleuropneumoniae JL03, an isolate of serotype 3 prevalent in China.</title>
        <authorList>
            <person name="Xu Z."/>
            <person name="Zhou Y."/>
            <person name="Li L."/>
            <person name="Zhou R."/>
            <person name="Xiao S."/>
            <person name="Wan Y."/>
            <person name="Zhang S."/>
            <person name="Wang K."/>
            <person name="Li W."/>
            <person name="Li L."/>
            <person name="Jin H."/>
            <person name="Kang M."/>
            <person name="Dalai B."/>
            <person name="Li T."/>
            <person name="Liu L."/>
            <person name="Cheng Y."/>
            <person name="Zhang L."/>
            <person name="Xu T."/>
            <person name="Zheng H."/>
            <person name="Pu S."/>
            <person name="Wang B."/>
            <person name="Gu W."/>
            <person name="Zhang X.L."/>
            <person name="Zhu G.-F."/>
            <person name="Wang S."/>
            <person name="Zhao G.-P."/>
            <person name="Chen H."/>
        </authorList>
    </citation>
    <scope>NUCLEOTIDE SEQUENCE [LARGE SCALE GENOMIC DNA]</scope>
    <source>
        <strain>JL03</strain>
    </source>
</reference>
<evidence type="ECO:0000255" key="1">
    <source>
        <dbReference type="HAMAP-Rule" id="MF_01551"/>
    </source>
</evidence>
<accession>B0BNW7</accession>
<protein>
    <recommendedName>
        <fullName evidence="1">Ribosomal RNA large subunit methyltransferase M</fullName>
        <ecNumber evidence="1">2.1.1.186</ecNumber>
    </recommendedName>
    <alternativeName>
        <fullName evidence="1">23S rRNA (cytidine2498-2'-O)-methyltransferase</fullName>
    </alternativeName>
    <alternativeName>
        <fullName evidence="1">23S rRNA 2'-O-ribose methyltransferase RlmM</fullName>
    </alternativeName>
</protein>
<sequence length="361" mass="41493">MNKLALYCRAGFEKETAGEITDKAAQLGVFGFVNLKENSGYIIFECYQAGDADRLARELKFEQLIFARQMIVVGDMLQDLPVEDRISPIVAQYQALNPRHSSDIFVETPDTNEAKELLTFCRKFTVPLRNSLKKQGWLTKSERAKGSIGLHILFVRPGCCYVGYAYNDNKSPFFMGIPRLKFPAEAPSRSTLKLEEAILTFIPEAEEKKRFTDEMTGVDLGACPGGWTYQLVKRGVFVYAVDHGKMAASLHETGRIEHCPEDGFKFQPPKRKTIDWLVCDMVEQPMRISKLIGKWLINGWCRETIFNLKLPMKKRYQEVQLCLAYLEEELEKQGFWFKIQAKHLYHDREEITVHIAVMGKR</sequence>